<name>CCL24_MOUSE</name>
<evidence type="ECO:0000250" key="1">
    <source>
        <dbReference type="UniProtKB" id="O00175"/>
    </source>
</evidence>
<evidence type="ECO:0000255" key="2"/>
<evidence type="ECO:0000256" key="3">
    <source>
        <dbReference type="SAM" id="MobiDB-lite"/>
    </source>
</evidence>
<evidence type="ECO:0000269" key="4">
    <source>
    </source>
</evidence>
<evidence type="ECO:0000269" key="5">
    <source>
    </source>
</evidence>
<evidence type="ECO:0000303" key="6">
    <source>
    </source>
</evidence>
<evidence type="ECO:0000303" key="7">
    <source ref="2"/>
</evidence>
<evidence type="ECO:0000305" key="8"/>
<evidence type="ECO:0000312" key="9">
    <source>
        <dbReference type="MGI" id="MGI:1928953"/>
    </source>
</evidence>
<feature type="signal peptide" evidence="2">
    <location>
        <begin position="1"/>
        <end position="26"/>
    </location>
</feature>
<feature type="chain" id="PRO_0000005233" description="C-C motif chemokine 24">
    <location>
        <begin position="27"/>
        <end position="119"/>
    </location>
</feature>
<feature type="region of interest" description="Disordered" evidence="3">
    <location>
        <begin position="96"/>
        <end position="119"/>
    </location>
</feature>
<feature type="compositionally biased region" description="Basic residues" evidence="3">
    <location>
        <begin position="101"/>
        <end position="119"/>
    </location>
</feature>
<feature type="glycosylation site" description="N-linked (GlcNAc...) asparagine" evidence="2">
    <location>
        <position position="54"/>
    </location>
</feature>
<feature type="glycosylation site" description="N-linked (GlcNAc...) asparagine" evidence="2">
    <location>
        <position position="115"/>
    </location>
</feature>
<feature type="disulfide bond" evidence="1">
    <location>
        <begin position="33"/>
        <end position="58"/>
    </location>
</feature>
<feature type="disulfide bond" evidence="1">
    <location>
        <begin position="34"/>
        <end position="74"/>
    </location>
</feature>
<organism>
    <name type="scientific">Mus musculus</name>
    <name type="common">Mouse</name>
    <dbReference type="NCBI Taxonomy" id="10090"/>
    <lineage>
        <taxon>Eukaryota</taxon>
        <taxon>Metazoa</taxon>
        <taxon>Chordata</taxon>
        <taxon>Craniata</taxon>
        <taxon>Vertebrata</taxon>
        <taxon>Euteleostomi</taxon>
        <taxon>Mammalia</taxon>
        <taxon>Eutheria</taxon>
        <taxon>Euarchontoglires</taxon>
        <taxon>Glires</taxon>
        <taxon>Rodentia</taxon>
        <taxon>Myomorpha</taxon>
        <taxon>Muroidea</taxon>
        <taxon>Muridae</taxon>
        <taxon>Murinae</taxon>
        <taxon>Mus</taxon>
        <taxon>Mus</taxon>
    </lineage>
</organism>
<comment type="function">
    <text evidence="1 5">Chemotactic for resting T-lymphocytes, and eosinophils (PubMed:15647285). Has lower chemotactic activity for neutrophils but none for monocytes and activated lymphocytes. Is a strong suppressor of colony formation by a multipotential hematopoietic progenitor cell line. Binds to CCR3 (By similarity).</text>
</comment>
<comment type="subcellular location">
    <subcellularLocation>
        <location evidence="1">Secreted</location>
    </subcellularLocation>
</comment>
<comment type="tissue specificity">
    <text evidence="4">Highest expression in jejunum and spleen. Lower levels found in liver and lung. No expression detected in kidney, thymus, brain or testis.</text>
</comment>
<comment type="induction">
    <text evidence="4 5">By interleukin-4 and allergen challenge with A.fumigatus (PubMed:11067944). By interleukin-13 (IL13) (PubMed:15647285).</text>
</comment>
<comment type="disruption phenotype">
    <text evidence="5">No visible phenotype in normal conditions (PubMed:15647285). Mice display a normal base-line eosinophil levels in the hematopoietic tissues and gastrointestinal tract (PubMed:15647285). However, following intratracheal IL13 administration, mice show a profound reduction in airway eosinophilia (PubMed:15647285).</text>
</comment>
<comment type="similarity">
    <text evidence="8">Belongs to the intercrine beta (chemokine CC) family.</text>
</comment>
<dbReference type="EMBL" id="AF281075">
    <property type="protein sequence ID" value="AAG32664.1"/>
    <property type="molecule type" value="mRNA"/>
</dbReference>
<dbReference type="EMBL" id="AF244367">
    <property type="protein sequence ID" value="AAF61736.1"/>
    <property type="molecule type" value="mRNA"/>
</dbReference>
<dbReference type="EMBL" id="BC065389">
    <property type="protein sequence ID" value="AAH65389.1"/>
    <property type="molecule type" value="mRNA"/>
</dbReference>
<dbReference type="CCDS" id="CCDS19742.1"/>
<dbReference type="RefSeq" id="NP_001343559.1">
    <property type="nucleotide sequence ID" value="NM_001356630.1"/>
</dbReference>
<dbReference type="RefSeq" id="NP_062523.1">
    <property type="nucleotide sequence ID" value="NM_019577.5"/>
</dbReference>
<dbReference type="RefSeq" id="XP_006504507.1">
    <property type="nucleotide sequence ID" value="XM_006504444.3"/>
</dbReference>
<dbReference type="RefSeq" id="XP_006504508.1">
    <property type="nucleotide sequence ID" value="XM_006504445.3"/>
</dbReference>
<dbReference type="SMR" id="Q9JKC0"/>
<dbReference type="FunCoup" id="Q9JKC0">
    <property type="interactions" value="889"/>
</dbReference>
<dbReference type="STRING" id="10090.ENSMUSP00000004936"/>
<dbReference type="GlyCosmos" id="Q9JKC0">
    <property type="glycosylation" value="2 sites, No reported glycans"/>
</dbReference>
<dbReference type="GlyGen" id="Q9JKC0">
    <property type="glycosylation" value="2 sites"/>
</dbReference>
<dbReference type="PaxDb" id="10090-ENSMUSP00000004936"/>
<dbReference type="ProteomicsDB" id="265612"/>
<dbReference type="Antibodypedia" id="14858">
    <property type="antibodies" value="508 antibodies from 31 providers"/>
</dbReference>
<dbReference type="DNASU" id="56221"/>
<dbReference type="Ensembl" id="ENSMUST00000004936.10">
    <property type="protein sequence ID" value="ENSMUSP00000004936.7"/>
    <property type="gene ID" value="ENSMUSG00000004814.11"/>
</dbReference>
<dbReference type="Ensembl" id="ENSMUST00000201401.2">
    <property type="protein sequence ID" value="ENSMUSP00000144002.2"/>
    <property type="gene ID" value="ENSMUSG00000004814.11"/>
</dbReference>
<dbReference type="GeneID" id="56221"/>
<dbReference type="KEGG" id="mmu:56221"/>
<dbReference type="UCSC" id="uc008zyn.1">
    <property type="organism name" value="mouse"/>
</dbReference>
<dbReference type="AGR" id="MGI:1928953"/>
<dbReference type="CTD" id="6369"/>
<dbReference type="MGI" id="MGI:1928953">
    <property type="gene designation" value="Ccl24"/>
</dbReference>
<dbReference type="VEuPathDB" id="HostDB:ENSMUSG00000004814"/>
<dbReference type="eggNOG" id="ENOG502S6ZP">
    <property type="taxonomic scope" value="Eukaryota"/>
</dbReference>
<dbReference type="GeneTree" id="ENSGT01100000263482"/>
<dbReference type="HOGENOM" id="CLU_141716_1_1_1"/>
<dbReference type="InParanoid" id="Q9JKC0"/>
<dbReference type="OMA" id="QKFCGNP"/>
<dbReference type="OrthoDB" id="9834099at2759"/>
<dbReference type="PhylomeDB" id="Q9JKC0"/>
<dbReference type="TreeFam" id="TF334888"/>
<dbReference type="BioGRID-ORCS" id="56221">
    <property type="hits" value="4 hits in 76 CRISPR screens"/>
</dbReference>
<dbReference type="PRO" id="PR:Q9JKC0"/>
<dbReference type="Proteomes" id="UP000000589">
    <property type="component" value="Chromosome 5"/>
</dbReference>
<dbReference type="RNAct" id="Q9JKC0">
    <property type="molecule type" value="protein"/>
</dbReference>
<dbReference type="Bgee" id="ENSMUSG00000004814">
    <property type="expression patterns" value="Expressed in small intestine Peyer's patch and 47 other cell types or tissues"/>
</dbReference>
<dbReference type="ExpressionAtlas" id="Q9JKC0">
    <property type="expression patterns" value="baseline and differential"/>
</dbReference>
<dbReference type="GO" id="GO:0005615">
    <property type="term" value="C:extracellular space"/>
    <property type="evidence" value="ECO:0007669"/>
    <property type="project" value="UniProtKB-KW"/>
</dbReference>
<dbReference type="GO" id="GO:0031728">
    <property type="term" value="F:CCR3 chemokine receptor binding"/>
    <property type="evidence" value="ECO:0007669"/>
    <property type="project" value="Ensembl"/>
</dbReference>
<dbReference type="GO" id="GO:0008009">
    <property type="term" value="F:chemokine activity"/>
    <property type="evidence" value="ECO:0007669"/>
    <property type="project" value="Ensembl"/>
</dbReference>
<dbReference type="GO" id="GO:0005125">
    <property type="term" value="F:cytokine activity"/>
    <property type="evidence" value="ECO:0000314"/>
    <property type="project" value="MGI"/>
</dbReference>
<dbReference type="GO" id="GO:0006935">
    <property type="term" value="P:chemotaxis"/>
    <property type="evidence" value="ECO:0000314"/>
    <property type="project" value="MGI"/>
</dbReference>
<dbReference type="GO" id="GO:0007010">
    <property type="term" value="P:cytoskeleton organization"/>
    <property type="evidence" value="ECO:0007669"/>
    <property type="project" value="Ensembl"/>
</dbReference>
<dbReference type="GO" id="GO:0048245">
    <property type="term" value="P:eosinophil chemotaxis"/>
    <property type="evidence" value="ECO:0007669"/>
    <property type="project" value="Ensembl"/>
</dbReference>
<dbReference type="GO" id="GO:0006955">
    <property type="term" value="P:immune response"/>
    <property type="evidence" value="ECO:0007669"/>
    <property type="project" value="InterPro"/>
</dbReference>
<dbReference type="GO" id="GO:0006954">
    <property type="term" value="P:inflammatory response"/>
    <property type="evidence" value="ECO:0007669"/>
    <property type="project" value="UniProtKB-KW"/>
</dbReference>
<dbReference type="GO" id="GO:0030838">
    <property type="term" value="P:positive regulation of actin filament polymerization"/>
    <property type="evidence" value="ECO:0007669"/>
    <property type="project" value="Ensembl"/>
</dbReference>
<dbReference type="GO" id="GO:0045766">
    <property type="term" value="P:positive regulation of angiogenesis"/>
    <property type="evidence" value="ECO:0000315"/>
    <property type="project" value="BHF-UCL"/>
</dbReference>
<dbReference type="GO" id="GO:0001938">
    <property type="term" value="P:positive regulation of endothelial cell proliferation"/>
    <property type="evidence" value="ECO:0007669"/>
    <property type="project" value="Ensembl"/>
</dbReference>
<dbReference type="GO" id="GO:2000418">
    <property type="term" value="P:positive regulation of eosinophil migration"/>
    <property type="evidence" value="ECO:0000315"/>
    <property type="project" value="MGI"/>
</dbReference>
<dbReference type="GO" id="GO:0050729">
    <property type="term" value="P:positive regulation of inflammatory response"/>
    <property type="evidence" value="ECO:0000315"/>
    <property type="project" value="BHF-UCL"/>
</dbReference>
<dbReference type="GO" id="GO:0008360">
    <property type="term" value="P:regulation of cell shape"/>
    <property type="evidence" value="ECO:0007669"/>
    <property type="project" value="Ensembl"/>
</dbReference>
<dbReference type="CDD" id="cd00272">
    <property type="entry name" value="Chemokine_CC"/>
    <property type="match status" value="1"/>
</dbReference>
<dbReference type="FunFam" id="2.40.50.40:FF:000002">
    <property type="entry name" value="C-C motif chemokine"/>
    <property type="match status" value="1"/>
</dbReference>
<dbReference type="Gene3D" id="2.40.50.40">
    <property type="match status" value="1"/>
</dbReference>
<dbReference type="InterPro" id="IPR039809">
    <property type="entry name" value="Chemokine_b/g/d"/>
</dbReference>
<dbReference type="InterPro" id="IPR000827">
    <property type="entry name" value="Chemokine_CC_CS"/>
</dbReference>
<dbReference type="InterPro" id="IPR001811">
    <property type="entry name" value="Chemokine_IL8-like_dom"/>
</dbReference>
<dbReference type="InterPro" id="IPR036048">
    <property type="entry name" value="Interleukin_8-like_sf"/>
</dbReference>
<dbReference type="PANTHER" id="PTHR12015:SF100">
    <property type="entry name" value="C-C MOTIF CHEMOKINE 24"/>
    <property type="match status" value="1"/>
</dbReference>
<dbReference type="PANTHER" id="PTHR12015">
    <property type="entry name" value="SMALL INDUCIBLE CYTOKINE A"/>
    <property type="match status" value="1"/>
</dbReference>
<dbReference type="Pfam" id="PF00048">
    <property type="entry name" value="IL8"/>
    <property type="match status" value="1"/>
</dbReference>
<dbReference type="SMART" id="SM00199">
    <property type="entry name" value="SCY"/>
    <property type="match status" value="1"/>
</dbReference>
<dbReference type="SUPFAM" id="SSF54117">
    <property type="entry name" value="Interleukin 8-like chemokines"/>
    <property type="match status" value="1"/>
</dbReference>
<dbReference type="PROSITE" id="PS00472">
    <property type="entry name" value="SMALL_CYTOKINES_CC"/>
    <property type="match status" value="1"/>
</dbReference>
<accession>Q9JKC0</accession>
<sequence length="119" mass="12871">MAGSATIVAGLLLLVACACCIFPIDSVTIPSSCCTSFISKKIPENRVVSYQLANGSICPKAGVIFITKKGHKICTDPKLLWVQRHIQKLDAKKNQPSKGAKAVRTKFAVQRRRGNSTEV</sequence>
<proteinExistence type="evidence at transcript level"/>
<reference key="1">
    <citation type="journal article" date="2000" name="J. Immunol.">
        <title>Murine eotaxin-2: a constitutive eosinophil chemokine induced by allergen challenge and IL-4 overexpression.</title>
        <authorList>
            <person name="Zimmermann N."/>
            <person name="Hogan S.P."/>
            <person name="Mishra A."/>
            <person name="Brandt E.B."/>
            <person name="Bodette T.R."/>
            <person name="Pope S.M."/>
            <person name="Finkelman F.D."/>
            <person name="Rothenberg M.E."/>
        </authorList>
    </citation>
    <scope>NUCLEOTIDE SEQUENCE [MRNA]</scope>
    <scope>TISSUE SPECIFICITY</scope>
    <scope>INDUCTION</scope>
</reference>
<reference key="2">
    <citation type="submission" date="2000-03" db="EMBL/GenBank/DDBJ databases">
        <title>Identification of a mouse homolog of CC chemokine CCL24/MPIF-2/Eotaxin-2.</title>
        <authorList>
            <person name="Rossi D."/>
            <person name="Zlotnik A."/>
        </authorList>
    </citation>
    <scope>NUCLEOTIDE SEQUENCE [MRNA]</scope>
</reference>
<reference key="3">
    <citation type="journal article" date="2004" name="Genome Res.">
        <title>The status, quality, and expansion of the NIH full-length cDNA project: the Mammalian Gene Collection (MGC).</title>
        <authorList>
            <consortium name="The MGC Project Team"/>
        </authorList>
    </citation>
    <scope>NUCLEOTIDE SEQUENCE [LARGE SCALE MRNA]</scope>
    <source>
        <strain>C57BL/6J</strain>
        <tissue>Thymus</tissue>
    </source>
</reference>
<reference key="4">
    <citation type="journal article" date="2005" name="J. Biol. Chem.">
        <title>Identification of a cooperative mechanism involving interleukin-13 and eotaxin-2 in experimental allergic lung inflammation.</title>
        <authorList>
            <person name="Pope S.M."/>
            <person name="Fulkerson P.C."/>
            <person name="Blanchard C."/>
            <person name="Saito Akei H."/>
            <person name="Nikolaidis N.M."/>
            <person name="Zimmermann N."/>
            <person name="Molkentin J.D."/>
            <person name="Rothenberg M.E."/>
        </authorList>
    </citation>
    <scope>FUNCTION</scope>
    <scope>INDUCTION</scope>
    <scope>DISRUPTION PHENOTYPE</scope>
</reference>
<gene>
    <name evidence="7 9" type="primary">Ccl24</name>
    <name type="synonym">Scya24</name>
</gene>
<keyword id="KW-0145">Chemotaxis</keyword>
<keyword id="KW-0202">Cytokine</keyword>
<keyword id="KW-1015">Disulfide bond</keyword>
<keyword id="KW-0325">Glycoprotein</keyword>
<keyword id="KW-0395">Inflammatory response</keyword>
<keyword id="KW-1185">Reference proteome</keyword>
<keyword id="KW-0964">Secreted</keyword>
<keyword id="KW-0732">Signal</keyword>
<protein>
    <recommendedName>
        <fullName>C-C motif chemokine 24</fullName>
    </recommendedName>
    <alternativeName>
        <fullName evidence="6">Eosinophil chemotactic protein 2</fullName>
        <shortName evidence="6">Eotaxin-2</shortName>
    </alternativeName>
    <alternativeName>
        <fullName>Small-inducible cytokine A24</fullName>
    </alternativeName>
</protein>